<reference key="1">
    <citation type="journal article" date="2009" name="BMC Genomics">
        <title>Genome evolution driven by host adaptations results in a more virulent and antimicrobial-resistant Streptococcus pneumoniae serotype 14.</title>
        <authorList>
            <person name="Ding F."/>
            <person name="Tang P."/>
            <person name="Hsu M.-H."/>
            <person name="Cui P."/>
            <person name="Hu S."/>
            <person name="Yu J."/>
            <person name="Chiu C.-H."/>
        </authorList>
    </citation>
    <scope>NUCLEOTIDE SEQUENCE [LARGE SCALE GENOMIC DNA]</scope>
    <source>
        <strain>CGSP14</strain>
    </source>
</reference>
<dbReference type="EC" id="1.1.1.17" evidence="1"/>
<dbReference type="EMBL" id="CP001033">
    <property type="protein sequence ID" value="ACB89649.1"/>
    <property type="molecule type" value="Genomic_DNA"/>
</dbReference>
<dbReference type="RefSeq" id="WP_000682977.1">
    <property type="nucleotide sequence ID" value="NC_010582.1"/>
</dbReference>
<dbReference type="SMR" id="B2ILU3"/>
<dbReference type="KEGG" id="spw:SPCG_0397"/>
<dbReference type="HOGENOM" id="CLU_036089_2_0_9"/>
<dbReference type="GO" id="GO:0005829">
    <property type="term" value="C:cytosol"/>
    <property type="evidence" value="ECO:0007669"/>
    <property type="project" value="TreeGrafter"/>
</dbReference>
<dbReference type="GO" id="GO:0008926">
    <property type="term" value="F:mannitol-1-phosphate 5-dehydrogenase activity"/>
    <property type="evidence" value="ECO:0007669"/>
    <property type="project" value="UniProtKB-UniRule"/>
</dbReference>
<dbReference type="GO" id="GO:0019592">
    <property type="term" value="P:mannitol catabolic process"/>
    <property type="evidence" value="ECO:0007669"/>
    <property type="project" value="TreeGrafter"/>
</dbReference>
<dbReference type="FunFam" id="1.10.1040.10:FF:000042">
    <property type="entry name" value="Mannitol-1-phosphate 5-dehydrogenase"/>
    <property type="match status" value="1"/>
</dbReference>
<dbReference type="FunFam" id="3.40.50.720:FF:000586">
    <property type="entry name" value="Mannitol-1-phosphate 5-dehydrogenase"/>
    <property type="match status" value="1"/>
</dbReference>
<dbReference type="Gene3D" id="1.10.1040.10">
    <property type="entry name" value="N-(1-d-carboxylethyl)-l-norvaline Dehydrogenase, domain 2"/>
    <property type="match status" value="1"/>
</dbReference>
<dbReference type="Gene3D" id="3.40.50.720">
    <property type="entry name" value="NAD(P)-binding Rossmann-like Domain"/>
    <property type="match status" value="1"/>
</dbReference>
<dbReference type="HAMAP" id="MF_00196">
    <property type="entry name" value="Mannitol_dehydrog"/>
    <property type="match status" value="1"/>
</dbReference>
<dbReference type="InterPro" id="IPR008927">
    <property type="entry name" value="6-PGluconate_DH-like_C_sf"/>
</dbReference>
<dbReference type="InterPro" id="IPR013328">
    <property type="entry name" value="6PGD_dom2"/>
</dbReference>
<dbReference type="InterPro" id="IPR023028">
    <property type="entry name" value="Mannitol_1_phos_5_DH"/>
</dbReference>
<dbReference type="InterPro" id="IPR000669">
    <property type="entry name" value="Mannitol_DH"/>
</dbReference>
<dbReference type="InterPro" id="IPR013118">
    <property type="entry name" value="Mannitol_DH_C"/>
</dbReference>
<dbReference type="InterPro" id="IPR023027">
    <property type="entry name" value="Mannitol_DH_CS"/>
</dbReference>
<dbReference type="InterPro" id="IPR013131">
    <property type="entry name" value="Mannitol_DH_N"/>
</dbReference>
<dbReference type="InterPro" id="IPR036291">
    <property type="entry name" value="NAD(P)-bd_dom_sf"/>
</dbReference>
<dbReference type="NCBIfam" id="NF002647">
    <property type="entry name" value="PRK02318.1-3"/>
    <property type="match status" value="1"/>
</dbReference>
<dbReference type="NCBIfam" id="NF002652">
    <property type="entry name" value="PRK02318.2-5"/>
    <property type="match status" value="1"/>
</dbReference>
<dbReference type="PANTHER" id="PTHR30524:SF0">
    <property type="entry name" value="ALTRONATE OXIDOREDUCTASE-RELATED"/>
    <property type="match status" value="1"/>
</dbReference>
<dbReference type="PANTHER" id="PTHR30524">
    <property type="entry name" value="MANNITOL-1-PHOSPHATE 5-DEHYDROGENASE"/>
    <property type="match status" value="1"/>
</dbReference>
<dbReference type="Pfam" id="PF01232">
    <property type="entry name" value="Mannitol_dh"/>
    <property type="match status" value="1"/>
</dbReference>
<dbReference type="Pfam" id="PF08125">
    <property type="entry name" value="Mannitol_dh_C"/>
    <property type="match status" value="1"/>
</dbReference>
<dbReference type="PRINTS" id="PR00084">
    <property type="entry name" value="MTLDHDRGNASE"/>
</dbReference>
<dbReference type="SUPFAM" id="SSF48179">
    <property type="entry name" value="6-phosphogluconate dehydrogenase C-terminal domain-like"/>
    <property type="match status" value="1"/>
</dbReference>
<dbReference type="SUPFAM" id="SSF51735">
    <property type="entry name" value="NAD(P)-binding Rossmann-fold domains"/>
    <property type="match status" value="1"/>
</dbReference>
<dbReference type="PROSITE" id="PS00974">
    <property type="entry name" value="MANNITOL_DHGENASE"/>
    <property type="match status" value="1"/>
</dbReference>
<proteinExistence type="inferred from homology"/>
<name>MTLD_STRPS</name>
<sequence>MKHSVHFGAGNIGRGFIGEILFKNGFHIDFVDVNNQIIHALNEKGKYEIEIAQKGQSRIEVTNVAGINSKEHPEQVIEAIQKTDIITTAIGPNILPFIAELLAKGIEARRVAGNTQVLDVMACENMIGGSQFLYQEVKKYLSPEGLTFADNYIGFPNAAVDRIVPAQSHEDSLFVVVEPFNEWVVETKRLKNPDLRLKDVHYEEDLEPFIERKLFSVNSGHATSAYIGAHYGAKTILEALQNPNIKSRIESVLAEIRSLLIAKWNFDKKELENYHKVIIERFENPFIVDEVSRVARTPIRKLGYNERFIRPIRELKELSLSYKNLLKTVGYAFDYRDVNDEESIRLGELLAKQSVKDVVIQVTGLDDQELIEQIVEYI</sequence>
<keyword id="KW-0520">NAD</keyword>
<keyword id="KW-0560">Oxidoreductase</keyword>
<gene>
    <name evidence="1" type="primary">mtlD</name>
    <name type="ordered locus">SPCG_0397</name>
</gene>
<feature type="chain" id="PRO_1000099206" description="Mannitol-1-phosphate 5-dehydrogenase">
    <location>
        <begin position="1"/>
        <end position="378"/>
    </location>
</feature>
<feature type="binding site" evidence="1">
    <location>
        <begin position="4"/>
        <end position="15"/>
    </location>
    <ligand>
        <name>NAD(+)</name>
        <dbReference type="ChEBI" id="CHEBI:57540"/>
    </ligand>
</feature>
<accession>B2ILU3</accession>
<protein>
    <recommendedName>
        <fullName evidence="1">Mannitol-1-phosphate 5-dehydrogenase</fullName>
        <ecNumber evidence="1">1.1.1.17</ecNumber>
    </recommendedName>
</protein>
<organism>
    <name type="scientific">Streptococcus pneumoniae (strain CGSP14)</name>
    <dbReference type="NCBI Taxonomy" id="516950"/>
    <lineage>
        <taxon>Bacteria</taxon>
        <taxon>Bacillati</taxon>
        <taxon>Bacillota</taxon>
        <taxon>Bacilli</taxon>
        <taxon>Lactobacillales</taxon>
        <taxon>Streptococcaceae</taxon>
        <taxon>Streptococcus</taxon>
    </lineage>
</organism>
<comment type="catalytic activity">
    <reaction evidence="1">
        <text>D-mannitol 1-phosphate + NAD(+) = beta-D-fructose 6-phosphate + NADH + H(+)</text>
        <dbReference type="Rhea" id="RHEA:19661"/>
        <dbReference type="ChEBI" id="CHEBI:15378"/>
        <dbReference type="ChEBI" id="CHEBI:57540"/>
        <dbReference type="ChEBI" id="CHEBI:57634"/>
        <dbReference type="ChEBI" id="CHEBI:57945"/>
        <dbReference type="ChEBI" id="CHEBI:61381"/>
        <dbReference type="EC" id="1.1.1.17"/>
    </reaction>
</comment>
<comment type="similarity">
    <text evidence="1">Belongs to the mannitol dehydrogenase family.</text>
</comment>
<evidence type="ECO:0000255" key="1">
    <source>
        <dbReference type="HAMAP-Rule" id="MF_00196"/>
    </source>
</evidence>